<accession>O28301</accession>
<protein>
    <recommendedName>
        <fullName>Divalent-cation tolerance protein CutA</fullName>
    </recommendedName>
</protein>
<reference key="1">
    <citation type="journal article" date="1997" name="Nature">
        <title>The complete genome sequence of the hyperthermophilic, sulphate-reducing archaeon Archaeoglobus fulgidus.</title>
        <authorList>
            <person name="Klenk H.-P."/>
            <person name="Clayton R.A."/>
            <person name="Tomb J.-F."/>
            <person name="White O."/>
            <person name="Nelson K.E."/>
            <person name="Ketchum K.A."/>
            <person name="Dodson R.J."/>
            <person name="Gwinn M.L."/>
            <person name="Hickey E.K."/>
            <person name="Peterson J.D."/>
            <person name="Richardson D.L."/>
            <person name="Kerlavage A.R."/>
            <person name="Graham D.E."/>
            <person name="Kyrpides N.C."/>
            <person name="Fleischmann R.D."/>
            <person name="Quackenbush J."/>
            <person name="Lee N.H."/>
            <person name="Sutton G.G."/>
            <person name="Gill S.R."/>
            <person name="Kirkness E.F."/>
            <person name="Dougherty B.A."/>
            <person name="McKenney K."/>
            <person name="Adams M.D."/>
            <person name="Loftus B.J."/>
            <person name="Peterson S.N."/>
            <person name="Reich C.I."/>
            <person name="McNeil L.K."/>
            <person name="Badger J.H."/>
            <person name="Glodek A."/>
            <person name="Zhou L."/>
            <person name="Overbeek R."/>
            <person name="Gocayne J.D."/>
            <person name="Weidman J.F."/>
            <person name="McDonald L.A."/>
            <person name="Utterback T.R."/>
            <person name="Cotton M.D."/>
            <person name="Spriggs T."/>
            <person name="Artiach P."/>
            <person name="Kaine B.P."/>
            <person name="Sykes S.M."/>
            <person name="Sadow P.W."/>
            <person name="D'Andrea K.P."/>
            <person name="Bowman C."/>
            <person name="Fujii C."/>
            <person name="Garland S.A."/>
            <person name="Mason T.M."/>
            <person name="Olsen G.J."/>
            <person name="Fraser C.M."/>
            <person name="Smith H.O."/>
            <person name="Woese C.R."/>
            <person name="Venter J.C."/>
        </authorList>
    </citation>
    <scope>NUCLEOTIDE SEQUENCE [LARGE SCALE GENOMIC DNA]</scope>
    <source>
        <strain>ATCC 49558 / DSM 4304 / JCM 9628 / NBRC 100126 / VC-16</strain>
    </source>
</reference>
<reference key="2">
    <citation type="submission" date="2003-04" db="PDB data bank">
        <title>Structure of the periplasmic divalent cation tolerance protein CutA from Archaeoglobus fulgidus.</title>
        <authorList>
            <person name="Kniewel R."/>
            <person name="Buglino J.A."/>
            <person name="Lima C.D."/>
        </authorList>
    </citation>
    <scope>X-RAY CRYSTALLOGRAPHY (2.0 ANGSTROMS)</scope>
</reference>
<dbReference type="EMBL" id="AE000782">
    <property type="protein sequence ID" value="AAB89277.1"/>
    <property type="molecule type" value="Genomic_DNA"/>
</dbReference>
<dbReference type="PIR" id="A69497">
    <property type="entry name" value="A69497"/>
</dbReference>
<dbReference type="RefSeq" id="WP_010879470.1">
    <property type="nucleotide sequence ID" value="NC_000917.1"/>
</dbReference>
<dbReference type="PDB" id="1P1L">
    <property type="method" value="X-ray"/>
    <property type="resolution" value="2.00 A"/>
    <property type="chains" value="A=1-102"/>
</dbReference>
<dbReference type="PDBsum" id="1P1L"/>
<dbReference type="SMR" id="O28301"/>
<dbReference type="STRING" id="224325.AF_1978"/>
<dbReference type="PaxDb" id="224325-AF_1978"/>
<dbReference type="EnsemblBacteria" id="AAB89277">
    <property type="protein sequence ID" value="AAB89277"/>
    <property type="gene ID" value="AF_1978"/>
</dbReference>
<dbReference type="GeneID" id="24795721"/>
<dbReference type="KEGG" id="afu:AF_1978"/>
<dbReference type="eggNOG" id="arCOG04231">
    <property type="taxonomic scope" value="Archaea"/>
</dbReference>
<dbReference type="HOGENOM" id="CLU_098807_3_1_2"/>
<dbReference type="OrthoDB" id="8015at2157"/>
<dbReference type="PhylomeDB" id="O28301"/>
<dbReference type="EvolutionaryTrace" id="O28301"/>
<dbReference type="Proteomes" id="UP000002199">
    <property type="component" value="Chromosome"/>
</dbReference>
<dbReference type="GO" id="GO:0005507">
    <property type="term" value="F:copper ion binding"/>
    <property type="evidence" value="ECO:0007669"/>
    <property type="project" value="TreeGrafter"/>
</dbReference>
<dbReference type="GO" id="GO:0010038">
    <property type="term" value="P:response to metal ion"/>
    <property type="evidence" value="ECO:0007669"/>
    <property type="project" value="InterPro"/>
</dbReference>
<dbReference type="Gene3D" id="3.30.70.120">
    <property type="match status" value="1"/>
</dbReference>
<dbReference type="InterPro" id="IPR053426">
    <property type="entry name" value="CutA_tolerance"/>
</dbReference>
<dbReference type="InterPro" id="IPR004323">
    <property type="entry name" value="Ion_tolerance_CutA"/>
</dbReference>
<dbReference type="InterPro" id="IPR011322">
    <property type="entry name" value="N-reg_PII-like_a/b"/>
</dbReference>
<dbReference type="InterPro" id="IPR015867">
    <property type="entry name" value="N-reg_PII/ATP_PRibTrfase_C"/>
</dbReference>
<dbReference type="NCBIfam" id="NF041095">
    <property type="entry name" value="dival_cat_tol_CutA"/>
    <property type="match status" value="1"/>
</dbReference>
<dbReference type="PANTHER" id="PTHR23419">
    <property type="entry name" value="DIVALENT CATION TOLERANCE CUTA-RELATED"/>
    <property type="match status" value="1"/>
</dbReference>
<dbReference type="PANTHER" id="PTHR23419:SF8">
    <property type="entry name" value="FI09726P"/>
    <property type="match status" value="1"/>
</dbReference>
<dbReference type="Pfam" id="PF03091">
    <property type="entry name" value="CutA1"/>
    <property type="match status" value="1"/>
</dbReference>
<dbReference type="SUPFAM" id="SSF54913">
    <property type="entry name" value="GlnB-like"/>
    <property type="match status" value="1"/>
</dbReference>
<feature type="chain" id="PRO_0000157128" description="Divalent-cation tolerance protein CutA">
    <location>
        <begin position="1"/>
        <end position="102"/>
    </location>
</feature>
<feature type="strand" evidence="3">
    <location>
        <begin position="2"/>
        <end position="11"/>
    </location>
</feature>
<feature type="helix" evidence="3">
    <location>
        <begin position="12"/>
        <end position="24"/>
    </location>
</feature>
<feature type="strand" evidence="3">
    <location>
        <begin position="29"/>
        <end position="42"/>
    </location>
</feature>
<feature type="strand" evidence="3">
    <location>
        <begin position="45"/>
        <end position="59"/>
    </location>
</feature>
<feature type="helix" evidence="3">
    <location>
        <begin position="60"/>
        <end position="62"/>
    </location>
</feature>
<feature type="helix" evidence="3">
    <location>
        <begin position="63"/>
        <end position="73"/>
    </location>
</feature>
<feature type="strand" evidence="3">
    <location>
        <begin position="75"/>
        <end position="78"/>
    </location>
</feature>
<feature type="strand" evidence="3">
    <location>
        <begin position="81"/>
        <end position="85"/>
    </location>
</feature>
<feature type="helix" evidence="3">
    <location>
        <begin position="91"/>
        <end position="101"/>
    </location>
</feature>
<comment type="function">
    <text evidence="1">Involved in resistance toward heavy metals.</text>
</comment>
<comment type="similarity">
    <text evidence="2">Belongs to the CutA family.</text>
</comment>
<organism>
    <name type="scientific">Archaeoglobus fulgidus (strain ATCC 49558 / DSM 4304 / JCM 9628 / NBRC 100126 / VC-16)</name>
    <dbReference type="NCBI Taxonomy" id="224325"/>
    <lineage>
        <taxon>Archaea</taxon>
        <taxon>Methanobacteriati</taxon>
        <taxon>Methanobacteriota</taxon>
        <taxon>Archaeoglobi</taxon>
        <taxon>Archaeoglobales</taxon>
        <taxon>Archaeoglobaceae</taxon>
        <taxon>Archaeoglobus</taxon>
    </lineage>
</organism>
<keyword id="KW-0002">3D-structure</keyword>
<keyword id="KW-1185">Reference proteome</keyword>
<gene>
    <name type="primary">cutA</name>
    <name type="ordered locus">AF_1978</name>
</gene>
<evidence type="ECO:0000250" key="1"/>
<evidence type="ECO:0000305" key="2"/>
<evidence type="ECO:0007829" key="3">
    <source>
        <dbReference type="PDB" id="1P1L"/>
    </source>
</evidence>
<sequence length="102" mass="11885">MHNFIYITAPSLEEAERIAKRLLEKKLAACVNIFPIKSFFWWEGKIEAATEFAMIVKTRSEKFAEVRDEVKAMHSYTTPCICAIPIERGLKEFLDWIDETVE</sequence>
<name>CUTA_ARCFU</name>
<proteinExistence type="evidence at protein level"/>